<proteinExistence type="inferred from homology"/>
<comment type="subcellular location">
    <subcellularLocation>
        <location evidence="1">Cell membrane</location>
        <topology evidence="1">Multi-pass membrane protein</topology>
    </subcellularLocation>
</comment>
<comment type="similarity">
    <text evidence="1">Belongs to the UPF0182 family.</text>
</comment>
<accession>B2HFI5</accession>
<evidence type="ECO:0000255" key="1">
    <source>
        <dbReference type="HAMAP-Rule" id="MF_01600"/>
    </source>
</evidence>
<evidence type="ECO:0000256" key="2">
    <source>
        <dbReference type="SAM" id="MobiDB-lite"/>
    </source>
</evidence>
<feature type="chain" id="PRO_1000148062" description="UPF0182 protein MMAR_1371">
    <location>
        <begin position="1"/>
        <end position="995"/>
    </location>
</feature>
<feature type="transmembrane region" description="Helical" evidence="1">
    <location>
        <begin position="18"/>
        <end position="38"/>
    </location>
</feature>
<feature type="transmembrane region" description="Helical" evidence="1">
    <location>
        <begin position="63"/>
        <end position="83"/>
    </location>
</feature>
<feature type="transmembrane region" description="Helical" evidence="1">
    <location>
        <begin position="113"/>
        <end position="133"/>
    </location>
</feature>
<feature type="transmembrane region" description="Helical" evidence="1">
    <location>
        <begin position="175"/>
        <end position="195"/>
    </location>
</feature>
<feature type="transmembrane region" description="Helical" evidence="1">
    <location>
        <begin position="210"/>
        <end position="230"/>
    </location>
</feature>
<feature type="transmembrane region" description="Helical" evidence="1">
    <location>
        <begin position="259"/>
        <end position="279"/>
    </location>
</feature>
<feature type="transmembrane region" description="Helical" evidence="1">
    <location>
        <begin position="287"/>
        <end position="307"/>
    </location>
</feature>
<feature type="region of interest" description="Disordered" evidence="2">
    <location>
        <begin position="900"/>
        <end position="948"/>
    </location>
</feature>
<feature type="compositionally biased region" description="Pro residues" evidence="2">
    <location>
        <begin position="928"/>
        <end position="941"/>
    </location>
</feature>
<organism>
    <name type="scientific">Mycobacterium marinum (strain ATCC BAA-535 / M)</name>
    <dbReference type="NCBI Taxonomy" id="216594"/>
    <lineage>
        <taxon>Bacteria</taxon>
        <taxon>Bacillati</taxon>
        <taxon>Actinomycetota</taxon>
        <taxon>Actinomycetes</taxon>
        <taxon>Mycobacteriales</taxon>
        <taxon>Mycobacteriaceae</taxon>
        <taxon>Mycobacterium</taxon>
        <taxon>Mycobacterium ulcerans group</taxon>
    </lineage>
</organism>
<gene>
    <name type="ordered locus">MMAR_1371</name>
</gene>
<dbReference type="EMBL" id="CP000854">
    <property type="protein sequence ID" value="ACC39830.1"/>
    <property type="molecule type" value="Genomic_DNA"/>
</dbReference>
<dbReference type="RefSeq" id="WP_012393237.1">
    <property type="nucleotide sequence ID" value="NC_010612.1"/>
</dbReference>
<dbReference type="SMR" id="B2HFI5"/>
<dbReference type="STRING" id="216594.MMAR_1371"/>
<dbReference type="KEGG" id="mmi:MMAR_1371"/>
<dbReference type="eggNOG" id="COG1615">
    <property type="taxonomic scope" value="Bacteria"/>
</dbReference>
<dbReference type="HOGENOM" id="CLU_007733_1_0_11"/>
<dbReference type="OrthoDB" id="9763654at2"/>
<dbReference type="Proteomes" id="UP000001190">
    <property type="component" value="Chromosome"/>
</dbReference>
<dbReference type="GO" id="GO:0005576">
    <property type="term" value="C:extracellular region"/>
    <property type="evidence" value="ECO:0007669"/>
    <property type="project" value="TreeGrafter"/>
</dbReference>
<dbReference type="GO" id="GO:0005886">
    <property type="term" value="C:plasma membrane"/>
    <property type="evidence" value="ECO:0007669"/>
    <property type="project" value="UniProtKB-SubCell"/>
</dbReference>
<dbReference type="HAMAP" id="MF_01600">
    <property type="entry name" value="UPF0182"/>
    <property type="match status" value="1"/>
</dbReference>
<dbReference type="InterPro" id="IPR005372">
    <property type="entry name" value="UPF0182"/>
</dbReference>
<dbReference type="NCBIfam" id="NF000825">
    <property type="entry name" value="PRK00068.1"/>
    <property type="match status" value="1"/>
</dbReference>
<dbReference type="NCBIfam" id="NF009097">
    <property type="entry name" value="PRK12438.1"/>
    <property type="match status" value="1"/>
</dbReference>
<dbReference type="PANTHER" id="PTHR39344">
    <property type="entry name" value="UPF0182 PROTEIN SLL1060"/>
    <property type="match status" value="1"/>
</dbReference>
<dbReference type="PANTHER" id="PTHR39344:SF1">
    <property type="entry name" value="UPF0182 PROTEIN SLL1060"/>
    <property type="match status" value="1"/>
</dbReference>
<dbReference type="Pfam" id="PF03699">
    <property type="entry name" value="UPF0182"/>
    <property type="match status" value="1"/>
</dbReference>
<keyword id="KW-1003">Cell membrane</keyword>
<keyword id="KW-0472">Membrane</keyword>
<keyword id="KW-1185">Reference proteome</keyword>
<keyword id="KW-0812">Transmembrane</keyword>
<keyword id="KW-1133">Transmembrane helix</keyword>
<name>Y1371_MYCMM</name>
<reference key="1">
    <citation type="journal article" date="2008" name="Genome Res.">
        <title>Insights from the complete genome sequence of Mycobacterium marinum on the evolution of Mycobacterium tuberculosis.</title>
        <authorList>
            <person name="Stinear T.P."/>
            <person name="Seemann T."/>
            <person name="Harrison P.F."/>
            <person name="Jenkin G.A."/>
            <person name="Davies J.K."/>
            <person name="Johnson P.D."/>
            <person name="Abdellah Z."/>
            <person name="Arrowsmith C."/>
            <person name="Chillingworth T."/>
            <person name="Churcher C."/>
            <person name="Clarke K."/>
            <person name="Cronin A."/>
            <person name="Davis P."/>
            <person name="Goodhead I."/>
            <person name="Holroyd N."/>
            <person name="Jagels K."/>
            <person name="Lord A."/>
            <person name="Moule S."/>
            <person name="Mungall K."/>
            <person name="Norbertczak H."/>
            <person name="Quail M.A."/>
            <person name="Rabbinowitsch E."/>
            <person name="Walker D."/>
            <person name="White B."/>
            <person name="Whitehead S."/>
            <person name="Small P.L."/>
            <person name="Brosch R."/>
            <person name="Ramakrishnan L."/>
            <person name="Fischbach M.A."/>
            <person name="Parkhill J."/>
            <person name="Cole S.T."/>
        </authorList>
    </citation>
    <scope>NUCLEOTIDE SEQUENCE [LARGE SCALE GENOMIC DNA]</scope>
    <source>
        <strain>ATCC BAA-535 / M</strain>
    </source>
</reference>
<sequence>MGMRPTARMPKLTRRSRVLILIALGVIALLLAGPRLIDAYVDWLWFGELGYRSVFTTVLVTRFLVFLVAGVLVGGIVFAGLALAYRTRPVFVPNNDNDPVARYRTVVLARLRLFGIGIPAAIGLLAGIVAQSYWVRIQLFLHGGDFGITDPQFGKDLGFYAFELPFYRLLLSYLFVAIFLAFVANVVSHYLFGGIRLTGRSGALSRSARIQLVSLVGVLVLLKAVAYWLDRYELLSHTRGGKPFTGAGYTDINAVLPAKLILMAIAVICAAAVFSAIVLRDLRIPAIGLVLLLLSSLIVGAAWPMIVEQISVKPNAAQKESEYISRSITATRQAYGLTSNVVTYRNYTGDGEATAQQVAADRATTSNIRLLDPTIVSPAFTQFQQGKNFYYFPDQLSIDRYFDRNNNLRDYVVAARELNPDRLIDNQRDWINRHTVYTHGNGFIASPANTVRGIANDPNQNGGYPEFLVNVVGANGTVVSDGPAPLDQPRIYYGPVISNTPADYAIVGKTGADREYDYETSADTKNYTYTGSGGVSVGSWISRTVFAAKFAERNFLFSNVIGSNSKILFNRDPAQRVEAVAPWLTTDSAVYPAIVNKRMVWILDGYTTLDNYPYSQLTSLSSATADSNEVAFNRLLPDKQVSYIRNSVKATVDAYDGTVTLYQQDEQDPVLKAWMQVFPGTVKPKGDISPELAAHLRYPEDLFKVQRMLLAKYHVNDPVTFFSTSDFWDVPLDPNPTASSYQPPYYIVAKNIAKNDNSASYQLISAMNRFKRDYLAAYISASSDPATYGKITVLTIPGQVNGPKLANNAITTDPAVSQDLGVIGRDNQNRIRWGNLLTLPVGQGGLLYVEPVYASPGASDAASSYPRLIRVAMMYNDKIGYGPTVRDALNGLFGPGAGDAATGIQPTEGGAPANVPPNNAPSPEALPGTPPSPPTAVPPAPEASVTLSPAKAAAMKEIQSAIGAARDAQKKGDFAAYGAALQRLDDAITKFNNTQ</sequence>
<protein>
    <recommendedName>
        <fullName evidence="1">UPF0182 protein MMAR_1371</fullName>
    </recommendedName>
</protein>